<feature type="chain" id="PRO_0000042765" description="Ubiquitin-like protein NEDD8">
    <location>
        <begin position="1"/>
        <end position="76"/>
    </location>
</feature>
<feature type="propeptide" id="PRO_0000042766" evidence="2">
    <location>
        <begin position="77"/>
        <end position="81"/>
    </location>
</feature>
<feature type="region of interest" description="Interaction with UBE1C" evidence="2">
    <location>
        <begin position="70"/>
        <end position="72"/>
    </location>
</feature>
<feature type="site" description="Interaction with UBE1C" evidence="2">
    <location>
        <position position="8"/>
    </location>
</feature>
<feature type="site" description="Interaction with UBE1C" evidence="2">
    <location>
        <position position="44"/>
    </location>
</feature>
<feature type="modified residue" description="N6-acetyllysine" evidence="1">
    <location>
        <position position="48"/>
    </location>
</feature>
<feature type="cross-link" description="Glycyl lysine isopeptide (Gly-Lys) (interchain with K-? in acceptor proteins)" evidence="4">
    <location>
        <position position="76"/>
    </location>
</feature>
<protein>
    <recommendedName>
        <fullName>Ubiquitin-like protein NEDD8</fullName>
    </recommendedName>
    <alternativeName>
        <fullName>Neddylin</fullName>
    </alternativeName>
</protein>
<name>NEDD8_BOVIN</name>
<evidence type="ECO:0000250" key="1">
    <source>
        <dbReference type="UniProtKB" id="P29595"/>
    </source>
</evidence>
<evidence type="ECO:0000250" key="2">
    <source>
        <dbReference type="UniProtKB" id="Q15843"/>
    </source>
</evidence>
<evidence type="ECO:0000250" key="3">
    <source>
        <dbReference type="UniProtKB" id="Q71UE8"/>
    </source>
</evidence>
<evidence type="ECO:0000255" key="4">
    <source>
        <dbReference type="PROSITE-ProRule" id="PRU00214"/>
    </source>
</evidence>
<evidence type="ECO:0000305" key="5"/>
<comment type="function">
    <text evidence="2">Ubiquitin-like protein which plays an important role in cell cycle control and embryogenesis via its conjugation to a limited number of cellular proteins, such as cullins or p53/TP53. Attachment of NEDD8 to cullins is critical for the recruitment of E2 to the cullin-RING-based E3 ubiquitin-protein ligase complex, thus facilitating polyubiquitination and proteasomal degradation of cyclins and other regulatory proteins. Attachment of NEDD8 to p53/TP53 inhibits p53/TP53 transcriptional activity. Covalent attachment to its substrates requires prior activation by the E1 complex UBE1C-APPBP1 and linkage to the E2 enzyme UBE2M.</text>
</comment>
<comment type="subunit">
    <text evidence="2 3">Interacts with AHR; interaction is direct (By similarity). Interacts with NUB1; interaction is direct (By similarity). Interacts with ESR1 (By similarity).</text>
</comment>
<comment type="subcellular location">
    <subcellularLocation>
        <location evidence="2">Nucleus</location>
    </subcellularLocation>
    <text evidence="2">Mainly nuclear.</text>
</comment>
<comment type="PTM">
    <text evidence="2">Cleavage of precursor form by UCHL3 or SENP8 is necessary for function.</text>
</comment>
<comment type="similarity">
    <text evidence="5">Belongs to the ubiquitin family.</text>
</comment>
<accession>P61282</accession>
<accession>Q3T0P8</accession>
<reference key="1">
    <citation type="journal article" date="2000" name="Virology">
        <title>Insertion of cellular NEDD8 coding sequences in a pestivirus.</title>
        <authorList>
            <person name="Baroth M."/>
            <person name="Orlich M."/>
            <person name="Thiel H.J."/>
            <person name="Becher P."/>
        </authorList>
    </citation>
    <scope>NUCLEOTIDE SEQUENCE [MRNA]</scope>
</reference>
<reference key="2">
    <citation type="submission" date="2005-08" db="EMBL/GenBank/DDBJ databases">
        <authorList>
            <consortium name="NIH - Mammalian Gene Collection (MGC) project"/>
        </authorList>
    </citation>
    <scope>NUCLEOTIDE SEQUENCE [LARGE SCALE MRNA]</scope>
    <source>
        <strain>Crossbred X Angus</strain>
        <tissue>Ileum</tissue>
    </source>
</reference>
<gene>
    <name type="primary">NEDD8</name>
</gene>
<dbReference type="EMBL" id="AF227256">
    <property type="protein sequence ID" value="AAF73911.1"/>
    <property type="molecule type" value="mRNA"/>
</dbReference>
<dbReference type="EMBL" id="BC102306">
    <property type="protein sequence ID" value="AAI02307.1"/>
    <property type="molecule type" value="mRNA"/>
</dbReference>
<dbReference type="RefSeq" id="NP_777189.1">
    <property type="nucleotide sequence ID" value="NM_174764.3"/>
</dbReference>
<dbReference type="BMRB" id="P61282"/>
<dbReference type="SMR" id="P61282"/>
<dbReference type="FunCoup" id="P61282">
    <property type="interactions" value="4044"/>
</dbReference>
<dbReference type="STRING" id="9913.ENSBTAP00000003514"/>
<dbReference type="PaxDb" id="9913-ENSBTAP00000003514"/>
<dbReference type="PeptideAtlas" id="P61282"/>
<dbReference type="GeneID" id="286796"/>
<dbReference type="KEGG" id="bta:286796"/>
<dbReference type="CTD" id="4738"/>
<dbReference type="VEuPathDB" id="HostDB:ENSBTAG00000038842"/>
<dbReference type="eggNOG" id="KOG0005">
    <property type="taxonomic scope" value="Eukaryota"/>
</dbReference>
<dbReference type="InParanoid" id="P61282"/>
<dbReference type="OMA" id="YAGKQMA"/>
<dbReference type="OrthoDB" id="428577at2759"/>
<dbReference type="Reactome" id="R-BTA-2173789">
    <property type="pathway name" value="TGF-beta receptor signaling activates SMADs"/>
</dbReference>
<dbReference type="Reactome" id="R-BTA-5689603">
    <property type="pathway name" value="UCH proteinases"/>
</dbReference>
<dbReference type="Reactome" id="R-BTA-8856825">
    <property type="pathway name" value="Cargo recognition for clathrin-mediated endocytosis"/>
</dbReference>
<dbReference type="Reactome" id="R-BTA-8951664">
    <property type="pathway name" value="Neddylation"/>
</dbReference>
<dbReference type="Reactome" id="R-BTA-917937">
    <property type="pathway name" value="Iron uptake and transport"/>
</dbReference>
<dbReference type="Proteomes" id="UP000009136">
    <property type="component" value="Chromosome 10"/>
</dbReference>
<dbReference type="Bgee" id="ENSBTAG00000038842">
    <property type="expression patterns" value="Expressed in oocyte and 103 other cell types or tissues"/>
</dbReference>
<dbReference type="GO" id="GO:0005737">
    <property type="term" value="C:cytoplasm"/>
    <property type="evidence" value="ECO:0000318"/>
    <property type="project" value="GO_Central"/>
</dbReference>
<dbReference type="GO" id="GO:0005634">
    <property type="term" value="C:nucleus"/>
    <property type="evidence" value="ECO:0000250"/>
    <property type="project" value="AgBase"/>
</dbReference>
<dbReference type="GO" id="GO:0031386">
    <property type="term" value="F:protein tag activity"/>
    <property type="evidence" value="ECO:0000318"/>
    <property type="project" value="GO_Central"/>
</dbReference>
<dbReference type="GO" id="GO:0031625">
    <property type="term" value="F:ubiquitin protein ligase binding"/>
    <property type="evidence" value="ECO:0000318"/>
    <property type="project" value="GO_Central"/>
</dbReference>
<dbReference type="GO" id="GO:0019941">
    <property type="term" value="P:modification-dependent protein catabolic process"/>
    <property type="evidence" value="ECO:0000318"/>
    <property type="project" value="GO_Central"/>
</dbReference>
<dbReference type="GO" id="GO:0008104">
    <property type="term" value="P:protein localization"/>
    <property type="evidence" value="ECO:0000250"/>
    <property type="project" value="AgBase"/>
</dbReference>
<dbReference type="GO" id="GO:0045116">
    <property type="term" value="P:protein neddylation"/>
    <property type="evidence" value="ECO:0000318"/>
    <property type="project" value="GO_Central"/>
</dbReference>
<dbReference type="GO" id="GO:0030162">
    <property type="term" value="P:regulation of proteolysis"/>
    <property type="evidence" value="ECO:0000318"/>
    <property type="project" value="GO_Central"/>
</dbReference>
<dbReference type="GO" id="GO:0006357">
    <property type="term" value="P:regulation of transcription by RNA polymerase II"/>
    <property type="evidence" value="ECO:0000250"/>
    <property type="project" value="AgBase"/>
</dbReference>
<dbReference type="CDD" id="cd01806">
    <property type="entry name" value="Ubl_NEDD8"/>
    <property type="match status" value="1"/>
</dbReference>
<dbReference type="FunFam" id="3.10.20.90:FF:000023">
    <property type="entry name" value="NEDD8 protein"/>
    <property type="match status" value="1"/>
</dbReference>
<dbReference type="Gene3D" id="3.10.20.90">
    <property type="entry name" value="Phosphatidylinositol 3-kinase Catalytic Subunit, Chain A, domain 1"/>
    <property type="match status" value="1"/>
</dbReference>
<dbReference type="InterPro" id="IPR038738">
    <property type="entry name" value="Nedd8-like"/>
</dbReference>
<dbReference type="InterPro" id="IPR000626">
    <property type="entry name" value="Ubiquitin-like_dom"/>
</dbReference>
<dbReference type="InterPro" id="IPR029071">
    <property type="entry name" value="Ubiquitin-like_domsf"/>
</dbReference>
<dbReference type="InterPro" id="IPR019954">
    <property type="entry name" value="Ubiquitin_CS"/>
</dbReference>
<dbReference type="InterPro" id="IPR019956">
    <property type="entry name" value="Ubiquitin_dom"/>
</dbReference>
<dbReference type="InterPro" id="IPR050158">
    <property type="entry name" value="Ubiquitin_ubiquitin-like"/>
</dbReference>
<dbReference type="PANTHER" id="PTHR10666">
    <property type="entry name" value="UBIQUITIN"/>
    <property type="match status" value="1"/>
</dbReference>
<dbReference type="Pfam" id="PF00240">
    <property type="entry name" value="ubiquitin"/>
    <property type="match status" value="1"/>
</dbReference>
<dbReference type="PRINTS" id="PR00348">
    <property type="entry name" value="UBIQUITIN"/>
</dbReference>
<dbReference type="SMART" id="SM00213">
    <property type="entry name" value="UBQ"/>
    <property type="match status" value="1"/>
</dbReference>
<dbReference type="SUPFAM" id="SSF54236">
    <property type="entry name" value="Ubiquitin-like"/>
    <property type="match status" value="1"/>
</dbReference>
<dbReference type="PROSITE" id="PS00299">
    <property type="entry name" value="UBIQUITIN_1"/>
    <property type="match status" value="1"/>
</dbReference>
<dbReference type="PROSITE" id="PS50053">
    <property type="entry name" value="UBIQUITIN_2"/>
    <property type="match status" value="1"/>
</dbReference>
<keyword id="KW-0007">Acetylation</keyword>
<keyword id="KW-1017">Isopeptide bond</keyword>
<keyword id="KW-0539">Nucleus</keyword>
<keyword id="KW-1185">Reference proteome</keyword>
<keyword id="KW-0833">Ubl conjugation pathway</keyword>
<sequence length="81" mass="9072">MLIKVKTLTGKEIEIDIEPTDKVERIKERVEEKEGIPPQQQRLIYSGKQMNDEKTAADYKILGGSVLHLVLALRGGGGLRQ</sequence>
<proteinExistence type="inferred from homology"/>
<organism>
    <name type="scientific">Bos taurus</name>
    <name type="common">Bovine</name>
    <dbReference type="NCBI Taxonomy" id="9913"/>
    <lineage>
        <taxon>Eukaryota</taxon>
        <taxon>Metazoa</taxon>
        <taxon>Chordata</taxon>
        <taxon>Craniata</taxon>
        <taxon>Vertebrata</taxon>
        <taxon>Euteleostomi</taxon>
        <taxon>Mammalia</taxon>
        <taxon>Eutheria</taxon>
        <taxon>Laurasiatheria</taxon>
        <taxon>Artiodactyla</taxon>
        <taxon>Ruminantia</taxon>
        <taxon>Pecora</taxon>
        <taxon>Bovidae</taxon>
        <taxon>Bovinae</taxon>
        <taxon>Bos</taxon>
    </lineage>
</organism>